<protein>
    <recommendedName>
        <fullName evidence="1">Dephospho-CoA kinase</fullName>
        <ecNumber evidence="1">2.7.1.24</ecNumber>
    </recommendedName>
    <alternativeName>
        <fullName evidence="1">Dephosphocoenzyme A kinase</fullName>
    </alternativeName>
</protein>
<gene>
    <name evidence="1" type="primary">coaE</name>
    <name type="ordered locus">CT1209</name>
</gene>
<keyword id="KW-0067">ATP-binding</keyword>
<keyword id="KW-0173">Coenzyme A biosynthesis</keyword>
<keyword id="KW-0963">Cytoplasm</keyword>
<keyword id="KW-0418">Kinase</keyword>
<keyword id="KW-0547">Nucleotide-binding</keyword>
<keyword id="KW-1185">Reference proteome</keyword>
<keyword id="KW-0808">Transferase</keyword>
<evidence type="ECO:0000255" key="1">
    <source>
        <dbReference type="HAMAP-Rule" id="MF_00376"/>
    </source>
</evidence>
<reference key="1">
    <citation type="journal article" date="2002" name="Proc. Natl. Acad. Sci. U.S.A.">
        <title>The complete genome sequence of Chlorobium tepidum TLS, a photosynthetic, anaerobic, green-sulfur bacterium.</title>
        <authorList>
            <person name="Eisen J.A."/>
            <person name="Nelson K.E."/>
            <person name="Paulsen I.T."/>
            <person name="Heidelberg J.F."/>
            <person name="Wu M."/>
            <person name="Dodson R.J."/>
            <person name="DeBoy R.T."/>
            <person name="Gwinn M.L."/>
            <person name="Nelson W.C."/>
            <person name="Haft D.H."/>
            <person name="Hickey E.K."/>
            <person name="Peterson J.D."/>
            <person name="Durkin A.S."/>
            <person name="Kolonay J.F."/>
            <person name="Yang F."/>
            <person name="Holt I.E."/>
            <person name="Umayam L.A."/>
            <person name="Mason T.M."/>
            <person name="Brenner M."/>
            <person name="Shea T.P."/>
            <person name="Parksey D.S."/>
            <person name="Nierman W.C."/>
            <person name="Feldblyum T.V."/>
            <person name="Hansen C.L."/>
            <person name="Craven M.B."/>
            <person name="Radune D."/>
            <person name="Vamathevan J.J."/>
            <person name="Khouri H.M."/>
            <person name="White O."/>
            <person name="Gruber T.M."/>
            <person name="Ketchum K.A."/>
            <person name="Venter J.C."/>
            <person name="Tettelin H."/>
            <person name="Bryant D.A."/>
            <person name="Fraser C.M."/>
        </authorList>
    </citation>
    <scope>NUCLEOTIDE SEQUENCE [LARGE SCALE GENOMIC DNA]</scope>
    <source>
        <strain>ATCC 49652 / DSM 12025 / NBRC 103806 / TLS</strain>
    </source>
</reference>
<proteinExistence type="inferred from homology"/>
<feature type="chain" id="PRO_0000172927" description="Dephospho-CoA kinase">
    <location>
        <begin position="1"/>
        <end position="208"/>
    </location>
</feature>
<feature type="domain" description="DPCK" evidence="1">
    <location>
        <begin position="8"/>
        <end position="208"/>
    </location>
</feature>
<feature type="binding site" evidence="1">
    <location>
        <begin position="16"/>
        <end position="21"/>
    </location>
    <ligand>
        <name>ATP</name>
        <dbReference type="ChEBI" id="CHEBI:30616"/>
    </ligand>
</feature>
<accession>Q8KD46</accession>
<comment type="function">
    <text evidence="1">Catalyzes the phosphorylation of the 3'-hydroxyl group of dephosphocoenzyme A to form coenzyme A.</text>
</comment>
<comment type="catalytic activity">
    <reaction evidence="1">
        <text>3'-dephospho-CoA + ATP = ADP + CoA + H(+)</text>
        <dbReference type="Rhea" id="RHEA:18245"/>
        <dbReference type="ChEBI" id="CHEBI:15378"/>
        <dbReference type="ChEBI" id="CHEBI:30616"/>
        <dbReference type="ChEBI" id="CHEBI:57287"/>
        <dbReference type="ChEBI" id="CHEBI:57328"/>
        <dbReference type="ChEBI" id="CHEBI:456216"/>
        <dbReference type="EC" id="2.7.1.24"/>
    </reaction>
</comment>
<comment type="pathway">
    <text evidence="1">Cofactor biosynthesis; coenzyme A biosynthesis; CoA from (R)-pantothenate: step 5/5.</text>
</comment>
<comment type="subcellular location">
    <subcellularLocation>
        <location evidence="1">Cytoplasm</location>
    </subcellularLocation>
</comment>
<comment type="similarity">
    <text evidence="1">Belongs to the CoaE family.</text>
</comment>
<organism>
    <name type="scientific">Chlorobaculum tepidum (strain ATCC 49652 / DSM 12025 / NBRC 103806 / TLS)</name>
    <name type="common">Chlorobium tepidum</name>
    <dbReference type="NCBI Taxonomy" id="194439"/>
    <lineage>
        <taxon>Bacteria</taxon>
        <taxon>Pseudomonadati</taxon>
        <taxon>Chlorobiota</taxon>
        <taxon>Chlorobiia</taxon>
        <taxon>Chlorobiales</taxon>
        <taxon>Chlorobiaceae</taxon>
        <taxon>Chlorobaculum</taxon>
    </lineage>
</organism>
<sequence length="208" mass="23057">MKARLPLLVGVTGGIGSGKSTVCAMLAEMGCELFEADRIAKELQVEDPEVIRGIEKLFGPDVYSRDASGKLLIDRKAIAAIVFSEPEKLAALNRLIHPKVREAFVNEVKRCAREGKRILCKEAAILFEAGADRDLDRIIVVAANDGLRLARAVARGLACEEARKRMQAQWPQEKLVERAHYVIFNDGTLDELRSQVEQVYQSLLTVVE</sequence>
<name>COAE_CHLTE</name>
<dbReference type="EC" id="2.7.1.24" evidence="1"/>
<dbReference type="EMBL" id="AE006470">
    <property type="protein sequence ID" value="AAM72441.1"/>
    <property type="molecule type" value="Genomic_DNA"/>
</dbReference>
<dbReference type="RefSeq" id="NP_662099.1">
    <property type="nucleotide sequence ID" value="NC_002932.3"/>
</dbReference>
<dbReference type="RefSeq" id="WP_010932880.1">
    <property type="nucleotide sequence ID" value="NC_002932.3"/>
</dbReference>
<dbReference type="SMR" id="Q8KD46"/>
<dbReference type="STRING" id="194439.CT1209"/>
<dbReference type="EnsemblBacteria" id="AAM72441">
    <property type="protein sequence ID" value="AAM72441"/>
    <property type="gene ID" value="CT1209"/>
</dbReference>
<dbReference type="KEGG" id="cte:CT1209"/>
<dbReference type="PATRIC" id="fig|194439.7.peg.1104"/>
<dbReference type="eggNOG" id="COG0237">
    <property type="taxonomic scope" value="Bacteria"/>
</dbReference>
<dbReference type="HOGENOM" id="CLU_057180_3_1_10"/>
<dbReference type="OrthoDB" id="9812943at2"/>
<dbReference type="UniPathway" id="UPA00241">
    <property type="reaction ID" value="UER00356"/>
</dbReference>
<dbReference type="Proteomes" id="UP000001007">
    <property type="component" value="Chromosome"/>
</dbReference>
<dbReference type="GO" id="GO:0005737">
    <property type="term" value="C:cytoplasm"/>
    <property type="evidence" value="ECO:0007669"/>
    <property type="project" value="UniProtKB-SubCell"/>
</dbReference>
<dbReference type="GO" id="GO:0005524">
    <property type="term" value="F:ATP binding"/>
    <property type="evidence" value="ECO:0007669"/>
    <property type="project" value="UniProtKB-UniRule"/>
</dbReference>
<dbReference type="GO" id="GO:0004140">
    <property type="term" value="F:dephospho-CoA kinase activity"/>
    <property type="evidence" value="ECO:0007669"/>
    <property type="project" value="UniProtKB-UniRule"/>
</dbReference>
<dbReference type="GO" id="GO:0015937">
    <property type="term" value="P:coenzyme A biosynthetic process"/>
    <property type="evidence" value="ECO:0007669"/>
    <property type="project" value="UniProtKB-UniRule"/>
</dbReference>
<dbReference type="CDD" id="cd02022">
    <property type="entry name" value="DPCK"/>
    <property type="match status" value="1"/>
</dbReference>
<dbReference type="Gene3D" id="3.40.50.300">
    <property type="entry name" value="P-loop containing nucleotide triphosphate hydrolases"/>
    <property type="match status" value="1"/>
</dbReference>
<dbReference type="HAMAP" id="MF_00376">
    <property type="entry name" value="Dephospho_CoA_kinase"/>
    <property type="match status" value="1"/>
</dbReference>
<dbReference type="InterPro" id="IPR001977">
    <property type="entry name" value="Depp_CoAkinase"/>
</dbReference>
<dbReference type="InterPro" id="IPR027417">
    <property type="entry name" value="P-loop_NTPase"/>
</dbReference>
<dbReference type="NCBIfam" id="TIGR00152">
    <property type="entry name" value="dephospho-CoA kinase"/>
    <property type="match status" value="1"/>
</dbReference>
<dbReference type="PANTHER" id="PTHR10695:SF46">
    <property type="entry name" value="BIFUNCTIONAL COENZYME A SYNTHASE-RELATED"/>
    <property type="match status" value="1"/>
</dbReference>
<dbReference type="PANTHER" id="PTHR10695">
    <property type="entry name" value="DEPHOSPHO-COA KINASE-RELATED"/>
    <property type="match status" value="1"/>
</dbReference>
<dbReference type="Pfam" id="PF01121">
    <property type="entry name" value="CoaE"/>
    <property type="match status" value="1"/>
</dbReference>
<dbReference type="SUPFAM" id="SSF52540">
    <property type="entry name" value="P-loop containing nucleoside triphosphate hydrolases"/>
    <property type="match status" value="1"/>
</dbReference>
<dbReference type="PROSITE" id="PS51219">
    <property type="entry name" value="DPCK"/>
    <property type="match status" value="1"/>
</dbReference>